<keyword id="KW-0963">Cytoplasm</keyword>
<keyword id="KW-0238">DNA-binding</keyword>
<keyword id="KW-1185">Reference proteome</keyword>
<proteinExistence type="inferred from homology"/>
<protein>
    <recommendedName>
        <fullName evidence="1">Nucleoid-associated protein GOX0603</fullName>
    </recommendedName>
</protein>
<dbReference type="EMBL" id="CP000009">
    <property type="protein sequence ID" value="AAW60381.1"/>
    <property type="molecule type" value="Genomic_DNA"/>
</dbReference>
<dbReference type="RefSeq" id="WP_011252180.1">
    <property type="nucleotide sequence ID" value="NC_006677.1"/>
</dbReference>
<dbReference type="SMR" id="Q5FTB5"/>
<dbReference type="STRING" id="290633.GOX0603"/>
<dbReference type="KEGG" id="gox:GOX0603"/>
<dbReference type="eggNOG" id="COG0718">
    <property type="taxonomic scope" value="Bacteria"/>
</dbReference>
<dbReference type="HOGENOM" id="CLU_140930_0_1_5"/>
<dbReference type="Proteomes" id="UP000006375">
    <property type="component" value="Chromosome"/>
</dbReference>
<dbReference type="GO" id="GO:0043590">
    <property type="term" value="C:bacterial nucleoid"/>
    <property type="evidence" value="ECO:0007669"/>
    <property type="project" value="UniProtKB-UniRule"/>
</dbReference>
<dbReference type="GO" id="GO:0005829">
    <property type="term" value="C:cytosol"/>
    <property type="evidence" value="ECO:0007669"/>
    <property type="project" value="TreeGrafter"/>
</dbReference>
<dbReference type="GO" id="GO:0003677">
    <property type="term" value="F:DNA binding"/>
    <property type="evidence" value="ECO:0007669"/>
    <property type="project" value="UniProtKB-UniRule"/>
</dbReference>
<dbReference type="Gene3D" id="3.30.1310.10">
    <property type="entry name" value="Nucleoid-associated protein YbaB-like domain"/>
    <property type="match status" value="1"/>
</dbReference>
<dbReference type="HAMAP" id="MF_00274">
    <property type="entry name" value="DNA_YbaB_EbfC"/>
    <property type="match status" value="1"/>
</dbReference>
<dbReference type="InterPro" id="IPR036894">
    <property type="entry name" value="YbaB-like_sf"/>
</dbReference>
<dbReference type="InterPro" id="IPR004401">
    <property type="entry name" value="YbaB/EbfC"/>
</dbReference>
<dbReference type="NCBIfam" id="TIGR00103">
    <property type="entry name" value="DNA_YbaB_EbfC"/>
    <property type="match status" value="1"/>
</dbReference>
<dbReference type="PANTHER" id="PTHR33449">
    <property type="entry name" value="NUCLEOID-ASSOCIATED PROTEIN YBAB"/>
    <property type="match status" value="1"/>
</dbReference>
<dbReference type="PANTHER" id="PTHR33449:SF1">
    <property type="entry name" value="NUCLEOID-ASSOCIATED PROTEIN YBAB"/>
    <property type="match status" value="1"/>
</dbReference>
<dbReference type="Pfam" id="PF02575">
    <property type="entry name" value="YbaB_DNA_bd"/>
    <property type="match status" value="1"/>
</dbReference>
<dbReference type="PIRSF" id="PIRSF004555">
    <property type="entry name" value="UCP004555"/>
    <property type="match status" value="1"/>
</dbReference>
<dbReference type="SUPFAM" id="SSF82607">
    <property type="entry name" value="YbaB-like"/>
    <property type="match status" value="1"/>
</dbReference>
<feature type="chain" id="PRO_1000003744" description="Nucleoid-associated protein GOX0603">
    <location>
        <begin position="1"/>
        <end position="107"/>
    </location>
</feature>
<reference key="1">
    <citation type="journal article" date="2005" name="Nat. Biotechnol.">
        <title>Complete genome sequence of the acetic acid bacterium Gluconobacter oxydans.</title>
        <authorList>
            <person name="Prust C."/>
            <person name="Hoffmeister M."/>
            <person name="Liesegang H."/>
            <person name="Wiezer A."/>
            <person name="Fricke W.F."/>
            <person name="Ehrenreich A."/>
            <person name="Gottschalk G."/>
            <person name="Deppenmeier U."/>
        </authorList>
    </citation>
    <scope>NUCLEOTIDE SEQUENCE [LARGE SCALE GENOMIC DNA]</scope>
    <source>
        <strain>621H</strain>
    </source>
</reference>
<organism>
    <name type="scientific">Gluconobacter oxydans (strain 621H)</name>
    <name type="common">Gluconobacter suboxydans</name>
    <dbReference type="NCBI Taxonomy" id="290633"/>
    <lineage>
        <taxon>Bacteria</taxon>
        <taxon>Pseudomonadati</taxon>
        <taxon>Pseudomonadota</taxon>
        <taxon>Alphaproteobacteria</taxon>
        <taxon>Acetobacterales</taxon>
        <taxon>Acetobacteraceae</taxon>
        <taxon>Gluconobacter</taxon>
    </lineage>
</organism>
<gene>
    <name type="ordered locus">GOX0603</name>
</gene>
<accession>Q5FTB5</accession>
<name>Y603_GLUOX</name>
<evidence type="ECO:0000255" key="1">
    <source>
        <dbReference type="HAMAP-Rule" id="MF_00274"/>
    </source>
</evidence>
<sequence length="107" mass="11119">MKNLAGLMKQASQMQAKMEAAQSNLASLIVDGSAGAGLVTVKLTGKGEMRDLKIDPQLADPSDIETLQDLIVAAYTDAKTKAEAASSEAMRDVTGGLDLPAGLKLPF</sequence>
<comment type="function">
    <text evidence="1">Binds to DNA and alters its conformation. May be involved in regulation of gene expression, nucleoid organization and DNA protection.</text>
</comment>
<comment type="subunit">
    <text evidence="1">Homodimer.</text>
</comment>
<comment type="subcellular location">
    <subcellularLocation>
        <location evidence="1">Cytoplasm</location>
        <location evidence="1">Nucleoid</location>
    </subcellularLocation>
</comment>
<comment type="similarity">
    <text evidence="1">Belongs to the YbaB/EbfC family.</text>
</comment>